<gene>
    <name type="ordered locus">NMB0255</name>
</gene>
<sequence>MPSENPIGKTMKSIDEQSLHNARRLFESGDIDRIEVGTTAGLQQIHRYLFGGLYDFAGQIREDNISKGGFRFANAMYLKEALVKIEQMPERTFEEIIAKYVEMNIAHPFLEGNGRSTRIWLDLVLKKNLKKVVNWQNVSKTLYLQAMERSPVNDLELRFLLKDNLTDDVDNREIIFKGIEQSYYYEGYEKG</sequence>
<name>NMFIC_NEIMB</name>
<accession>Q7DDR9</accession>
<comment type="function">
    <text evidence="2">Adenylyltransferase that mediates the addition of adenosine 5'-monophosphate (AMP) to specific residues of target proteins.</text>
</comment>
<comment type="catalytic activity">
    <reaction evidence="2 3">
        <text>L-tyrosyl-[protein] + ATP = O-(5'-adenylyl)-L-tyrosyl-[protein] + diphosphate</text>
        <dbReference type="Rhea" id="RHEA:54288"/>
        <dbReference type="Rhea" id="RHEA-COMP:10136"/>
        <dbReference type="Rhea" id="RHEA-COMP:13846"/>
        <dbReference type="ChEBI" id="CHEBI:30616"/>
        <dbReference type="ChEBI" id="CHEBI:33019"/>
        <dbReference type="ChEBI" id="CHEBI:46858"/>
        <dbReference type="ChEBI" id="CHEBI:83624"/>
        <dbReference type="EC" id="2.7.7.108"/>
    </reaction>
</comment>
<comment type="catalytic activity">
    <reaction evidence="2 3">
        <text>L-threonyl-[protein] + ATP = 3-O-(5'-adenylyl)-L-threonyl-[protein] + diphosphate</text>
        <dbReference type="Rhea" id="RHEA:54292"/>
        <dbReference type="Rhea" id="RHEA-COMP:11060"/>
        <dbReference type="Rhea" id="RHEA-COMP:13847"/>
        <dbReference type="ChEBI" id="CHEBI:30013"/>
        <dbReference type="ChEBI" id="CHEBI:30616"/>
        <dbReference type="ChEBI" id="CHEBI:33019"/>
        <dbReference type="ChEBI" id="CHEBI:138113"/>
        <dbReference type="EC" id="2.7.7.108"/>
    </reaction>
</comment>
<comment type="activity regulation">
    <text evidence="2">Adenylyltransferase activity is inhibited by the inhibitory helix present at the C-terminus: Glu-186 binds ATP and competes with ATP-binding at Arg-118, thereby preventing adenylyltransferase activity. Activation dissociates ATP-binding from Glu-186, allowing ordered binding of the entire ATP moiety with the alpha-phosphate in an orientation that is productive for accepting an incoming target hydroxyl side chain.</text>
</comment>
<comment type="subunit">
    <text evidence="2 3">Homodimer.</text>
</comment>
<comment type="PTM">
    <text evidence="2">Auto-AMPylation at Tyr-183 in vitro.</text>
</comment>
<comment type="miscellaneous">
    <text evidence="4">Defined as class III fido-domain containing proteins, in which the inhibitory helix is present at the C-terminus of the Fido domain.</text>
</comment>
<keyword id="KW-0002">3D-structure</keyword>
<keyword id="KW-0067">ATP-binding</keyword>
<keyword id="KW-0547">Nucleotide-binding</keyword>
<keyword id="KW-0548">Nucleotidyltransferase</keyword>
<keyword id="KW-0597">Phosphoprotein</keyword>
<keyword id="KW-1185">Reference proteome</keyword>
<keyword id="KW-0808">Transferase</keyword>
<protein>
    <recommendedName>
        <fullName>Protein adenylyltransferase NmFic</fullName>
        <ecNumber evidence="2 3">2.7.7.108</ecNumber>
    </recommendedName>
    <alternativeName>
        <fullName>AMPylator NmFic</fullName>
    </alternativeName>
</protein>
<dbReference type="EC" id="2.7.7.108" evidence="2 3"/>
<dbReference type="EMBL" id="AE002098">
    <property type="protein sequence ID" value="AAF40709.1"/>
    <property type="molecule type" value="Genomic_DNA"/>
</dbReference>
<dbReference type="PIR" id="B81220">
    <property type="entry name" value="B81220"/>
</dbReference>
<dbReference type="RefSeq" id="NP_273311.1">
    <property type="nucleotide sequence ID" value="NC_003112.2"/>
</dbReference>
<dbReference type="PDB" id="2G03">
    <property type="method" value="X-ray"/>
    <property type="resolution" value="2.20 A"/>
    <property type="chains" value="A=1-191"/>
</dbReference>
<dbReference type="PDB" id="3S6A">
    <property type="method" value="X-ray"/>
    <property type="resolution" value="2.20 A"/>
    <property type="chains" value="A=11-191"/>
</dbReference>
<dbReference type="PDB" id="3SE5">
    <property type="method" value="X-ray"/>
    <property type="resolution" value="1.70 A"/>
    <property type="chains" value="A/B/C/D=11-167"/>
</dbReference>
<dbReference type="PDB" id="3SN9">
    <property type="method" value="X-ray"/>
    <property type="resolution" value="3.03 A"/>
    <property type="chains" value="A/B/C/D/E/F/G/H/I/J/K/L/M/N/O/P=11-191"/>
</dbReference>
<dbReference type="PDB" id="3ZLM">
    <property type="method" value="X-ray"/>
    <property type="resolution" value="2.00 A"/>
    <property type="chains" value="A=11-191"/>
</dbReference>
<dbReference type="PDB" id="5CGL">
    <property type="method" value="X-ray"/>
    <property type="resolution" value="2.35 A"/>
    <property type="chains" value="A/B=11-191"/>
</dbReference>
<dbReference type="PDB" id="5CKL">
    <property type="method" value="X-ray"/>
    <property type="resolution" value="0.99 A"/>
    <property type="chains" value="A=11-191"/>
</dbReference>
<dbReference type="PDB" id="5CMT">
    <property type="method" value="X-ray"/>
    <property type="resolution" value="0.99 A"/>
    <property type="chains" value="A=11-191"/>
</dbReference>
<dbReference type="PDBsum" id="2G03"/>
<dbReference type="PDBsum" id="3S6A"/>
<dbReference type="PDBsum" id="3SE5"/>
<dbReference type="PDBsum" id="3SN9"/>
<dbReference type="PDBsum" id="3ZLM"/>
<dbReference type="PDBsum" id="5CGL"/>
<dbReference type="PDBsum" id="5CKL"/>
<dbReference type="PDBsum" id="5CMT"/>
<dbReference type="SMR" id="Q7DDR9"/>
<dbReference type="DIP" id="DIP-60138N"/>
<dbReference type="FunCoup" id="Q7DDR9">
    <property type="interactions" value="7"/>
</dbReference>
<dbReference type="STRING" id="122586.NMB0255"/>
<dbReference type="PaxDb" id="122586-NMB0255"/>
<dbReference type="KEGG" id="nme:NMB0255"/>
<dbReference type="PATRIC" id="fig|122586.8.peg.318"/>
<dbReference type="HOGENOM" id="CLU_080158_4_0_4"/>
<dbReference type="InParanoid" id="Q7DDR9"/>
<dbReference type="OrthoDB" id="9813719at2"/>
<dbReference type="EvolutionaryTrace" id="Q7DDR9"/>
<dbReference type="Proteomes" id="UP000000425">
    <property type="component" value="Chromosome"/>
</dbReference>
<dbReference type="GO" id="GO:0070733">
    <property type="term" value="F:AMPylase activity"/>
    <property type="evidence" value="ECO:0000314"/>
    <property type="project" value="UniProtKB"/>
</dbReference>
<dbReference type="GO" id="GO:0005524">
    <property type="term" value="F:ATP binding"/>
    <property type="evidence" value="ECO:0000314"/>
    <property type="project" value="UniProtKB"/>
</dbReference>
<dbReference type="GO" id="GO:0042803">
    <property type="term" value="F:protein homodimerization activity"/>
    <property type="evidence" value="ECO:0000314"/>
    <property type="project" value="UniProtKB"/>
</dbReference>
<dbReference type="GO" id="GO:0018117">
    <property type="term" value="P:protein adenylylation"/>
    <property type="evidence" value="ECO:0000314"/>
    <property type="project" value="UniProtKB"/>
</dbReference>
<dbReference type="GO" id="GO:0051302">
    <property type="term" value="P:regulation of cell division"/>
    <property type="evidence" value="ECO:0000318"/>
    <property type="project" value="GO_Central"/>
</dbReference>
<dbReference type="FunFam" id="1.10.3290.10:FF:000002">
    <property type="entry name" value="Protein adenylyltransferase NmFic"/>
    <property type="match status" value="1"/>
</dbReference>
<dbReference type="Gene3D" id="1.10.3290.10">
    <property type="entry name" value="Fido-like domain"/>
    <property type="match status" value="1"/>
</dbReference>
<dbReference type="InterPro" id="IPR003812">
    <property type="entry name" value="Fido"/>
</dbReference>
<dbReference type="InterPro" id="IPR036597">
    <property type="entry name" value="Fido-like_dom_sf"/>
</dbReference>
<dbReference type="NCBIfam" id="NF046029">
    <property type="entry name" value="ProtAdlyltaseNmFic"/>
    <property type="match status" value="1"/>
</dbReference>
<dbReference type="PANTHER" id="PTHR39560">
    <property type="entry name" value="PROTEIN ADENYLYLTRANSFERASE FIC-RELATED"/>
    <property type="match status" value="1"/>
</dbReference>
<dbReference type="PANTHER" id="PTHR39560:SF1">
    <property type="entry name" value="PROTEIN ADENYLYLTRANSFERASE FIC-RELATED"/>
    <property type="match status" value="1"/>
</dbReference>
<dbReference type="Pfam" id="PF02661">
    <property type="entry name" value="Fic"/>
    <property type="match status" value="1"/>
</dbReference>
<dbReference type="SUPFAM" id="SSF140931">
    <property type="entry name" value="Fic-like"/>
    <property type="match status" value="1"/>
</dbReference>
<dbReference type="PROSITE" id="PS51459">
    <property type="entry name" value="FIDO"/>
    <property type="match status" value="1"/>
</dbReference>
<organism>
    <name type="scientific">Neisseria meningitidis serogroup B (strain ATCC BAA-335 / MC58)</name>
    <dbReference type="NCBI Taxonomy" id="122586"/>
    <lineage>
        <taxon>Bacteria</taxon>
        <taxon>Pseudomonadati</taxon>
        <taxon>Pseudomonadota</taxon>
        <taxon>Betaproteobacteria</taxon>
        <taxon>Neisseriales</taxon>
        <taxon>Neisseriaceae</taxon>
        <taxon>Neisseria</taxon>
    </lineage>
</organism>
<proteinExistence type="evidence at protein level"/>
<reference key="1">
    <citation type="journal article" date="2000" name="Science">
        <title>Complete genome sequence of Neisseria meningitidis serogroup B strain MC58.</title>
        <authorList>
            <person name="Tettelin H."/>
            <person name="Saunders N.J."/>
            <person name="Heidelberg J.F."/>
            <person name="Jeffries A.C."/>
            <person name="Nelson K.E."/>
            <person name="Eisen J.A."/>
            <person name="Ketchum K.A."/>
            <person name="Hood D.W."/>
            <person name="Peden J.F."/>
            <person name="Dodson R.J."/>
            <person name="Nelson W.C."/>
            <person name="Gwinn M.L."/>
            <person name="DeBoy R.T."/>
            <person name="Peterson J.D."/>
            <person name="Hickey E.K."/>
            <person name="Haft D.H."/>
            <person name="Salzberg S.L."/>
            <person name="White O."/>
            <person name="Fleischmann R.D."/>
            <person name="Dougherty B.A."/>
            <person name="Mason T.M."/>
            <person name="Ciecko A."/>
            <person name="Parksey D.S."/>
            <person name="Blair E."/>
            <person name="Cittone H."/>
            <person name="Clark E.B."/>
            <person name="Cotton M.D."/>
            <person name="Utterback T.R."/>
            <person name="Khouri H.M."/>
            <person name="Qin H."/>
            <person name="Vamathevan J.J."/>
            <person name="Gill J."/>
            <person name="Scarlato V."/>
            <person name="Masignani V."/>
            <person name="Pizza M."/>
            <person name="Grandi G."/>
            <person name="Sun L."/>
            <person name="Smith H.O."/>
            <person name="Fraser C.M."/>
            <person name="Moxon E.R."/>
            <person name="Rappuoli R."/>
            <person name="Venter J.C."/>
        </authorList>
    </citation>
    <scope>NUCLEOTIDE SEQUENCE [LARGE SCALE GENOMIC DNA]</scope>
    <source>
        <strain>ATCC BAA-335 / MC58</strain>
    </source>
</reference>
<reference key="2">
    <citation type="submission" date="2006-02" db="PDB data bank">
        <title>Structure of a putative cell filamentation protein from Neisseria meningitidis.</title>
        <authorList>
            <person name="Cuff M.E."/>
            <person name="Bigelow L."/>
            <person name="Bargassa M."/>
            <person name="Joachimiak A."/>
        </authorList>
    </citation>
    <scope>X-RAY CRYSTALLOGRAPHY (2.20 ANGSTROMS)</scope>
</reference>
<reference key="3">
    <citation type="journal article" date="2012" name="Nature">
        <title>Adenylylation control by intra- or intermolecular active-site obstruction in Fic proteins.</title>
        <authorList>
            <person name="Engel P."/>
            <person name="Goepfert A."/>
            <person name="Stanger F.V."/>
            <person name="Harms A."/>
            <person name="Schmidt A."/>
            <person name="Schirmer T."/>
            <person name="Dehio C."/>
        </authorList>
    </citation>
    <scope>X-RAY CRYSTALLOGRAPHY (1.7 ANGSTROMS) OF 11-167 IN COMPLEX WITH ATP</scope>
    <scope>CATALYTIC ACTIVITY</scope>
    <scope>FUNCTION</scope>
    <scope>AMPYLATION AT TYR-183</scope>
    <scope>ACTIVITY REGULATION</scope>
    <scope>MUTAGENESIS OF SER-182 AND GLU-186</scope>
    <source>
        <strain>ATCC BAA-335 / MC58</strain>
    </source>
</reference>
<reference key="4">
    <citation type="journal article" date="2013" name="PLoS ONE">
        <title>Conserved inhibitory mechanism and competent ATP binding mode for adenylyltransferases with Fic fold.</title>
        <authorList>
            <person name="Goepfert A."/>
            <person name="Stanger F.V."/>
            <person name="Dehio C."/>
            <person name="Schirmer T."/>
        </authorList>
    </citation>
    <scope>X-RAY CRYSTALLOGRAPHY (2.0 ANGSTROMS) OF 11-191 OF MUTANT GLY-186 IN COMPLEX WITH ATP ANALOG</scope>
    <scope>CATALYTIC ACTIVITY</scope>
    <scope>SUBUNIT</scope>
    <scope>MUTAGENESIS OF GLU-186</scope>
</reference>
<feature type="chain" id="PRO_0000417551" description="Protein adenylyltransferase NmFic">
    <location>
        <begin position="1"/>
        <end position="191"/>
    </location>
</feature>
<feature type="domain" description="Fido" evidence="1">
    <location>
        <begin position="37"/>
        <end position="162"/>
    </location>
</feature>
<feature type="short sequence motif" description="Inhibitory (S/T)XXXE(G/N) motif">
    <location>
        <begin position="182"/>
        <end position="187"/>
    </location>
</feature>
<feature type="binding site" evidence="2">
    <location>
        <position position="67"/>
    </location>
    <ligand>
        <name>ATP</name>
        <dbReference type="ChEBI" id="CHEBI:30616"/>
    </ligand>
</feature>
<feature type="binding site" evidence="2">
    <location>
        <begin position="104"/>
        <end position="107"/>
    </location>
    <ligand>
        <name>ATP</name>
        <dbReference type="ChEBI" id="CHEBI:30616"/>
    </ligand>
</feature>
<feature type="binding site" evidence="2">
    <location>
        <begin position="112"/>
        <end position="118"/>
    </location>
    <ligand>
        <name>ATP</name>
        <dbReference type="ChEBI" id="CHEBI:30616"/>
    </ligand>
</feature>
<feature type="binding site" evidence="2">
    <location>
        <begin position="140"/>
        <end position="143"/>
    </location>
    <ligand>
        <name>ATP</name>
        <dbReference type="ChEBI" id="CHEBI:30616"/>
    </ligand>
</feature>
<feature type="binding site" evidence="2">
    <location>
        <position position="186"/>
    </location>
    <ligand>
        <name>ATP</name>
        <dbReference type="ChEBI" id="CHEBI:30616"/>
    </ligand>
</feature>
<feature type="modified residue" description="O-AMP-tyrosine; in vitro" evidence="2">
    <location>
        <position position="183"/>
    </location>
</feature>
<feature type="mutagenesis site" description="Promotes adenylyltransferase activity; when associated with A-186." evidence="2">
    <original>S</original>
    <variation>A</variation>
    <location>
        <position position="182"/>
    </location>
</feature>
<feature type="mutagenesis site" description="Promotes adenylyltransferase activity; when associated with A-182." evidence="2 3">
    <original>E</original>
    <variation>A</variation>
    <location>
        <position position="186"/>
    </location>
</feature>
<feature type="mutagenesis site" description="Promotes adenylyltransferase activity." evidence="2 3">
    <original>E</original>
    <variation>G</variation>
    <location>
        <position position="186"/>
    </location>
</feature>
<feature type="helix" evidence="5">
    <location>
        <begin position="14"/>
        <end position="27"/>
    </location>
</feature>
<feature type="helix" evidence="5">
    <location>
        <begin position="30"/>
        <end position="33"/>
    </location>
</feature>
<feature type="strand" evidence="5">
    <location>
        <begin position="36"/>
        <end position="38"/>
    </location>
</feature>
<feature type="helix" evidence="5">
    <location>
        <begin position="39"/>
        <end position="50"/>
    </location>
</feature>
<feature type="turn" evidence="5">
    <location>
        <begin position="51"/>
        <end position="53"/>
    </location>
</feature>
<feature type="turn" evidence="5">
    <location>
        <begin position="55"/>
        <end position="58"/>
    </location>
</feature>
<feature type="helix" evidence="5">
    <location>
        <begin position="75"/>
        <end position="86"/>
    </location>
</feature>
<feature type="helix" evidence="5">
    <location>
        <begin position="93"/>
        <end position="106"/>
    </location>
</feature>
<feature type="strand" evidence="5">
    <location>
        <begin position="109"/>
        <end position="111"/>
    </location>
</feature>
<feature type="helix" evidence="5">
    <location>
        <begin position="113"/>
        <end position="129"/>
    </location>
</feature>
<feature type="helix" evidence="5">
    <location>
        <begin position="135"/>
        <end position="137"/>
    </location>
</feature>
<feature type="helix" evidence="5">
    <location>
        <begin position="140"/>
        <end position="149"/>
    </location>
</feature>
<feature type="turn" evidence="5">
    <location>
        <begin position="150"/>
        <end position="152"/>
    </location>
</feature>
<feature type="helix" evidence="5">
    <location>
        <begin position="155"/>
        <end position="162"/>
    </location>
</feature>
<feature type="strand" evidence="5">
    <location>
        <begin position="165"/>
        <end position="167"/>
    </location>
</feature>
<feature type="helix" evidence="5">
    <location>
        <begin position="172"/>
        <end position="185"/>
    </location>
</feature>
<evidence type="ECO:0000255" key="1">
    <source>
        <dbReference type="PROSITE-ProRule" id="PRU00791"/>
    </source>
</evidence>
<evidence type="ECO:0000269" key="2">
    <source>
    </source>
</evidence>
<evidence type="ECO:0000269" key="3">
    <source>
    </source>
</evidence>
<evidence type="ECO:0000305" key="4">
    <source>
    </source>
</evidence>
<evidence type="ECO:0007829" key="5">
    <source>
        <dbReference type="PDB" id="5CKL"/>
    </source>
</evidence>